<keyword id="KW-0687">Ribonucleoprotein</keyword>
<keyword id="KW-0689">Ribosomal protein</keyword>
<gene>
    <name evidence="1" type="primary">rps3ae</name>
    <name type="ordered locus">OE_2159R</name>
</gene>
<protein>
    <recommendedName>
        <fullName evidence="1">Small ribosomal subunit protein eS1</fullName>
    </recommendedName>
    <alternativeName>
        <fullName evidence="2">30S ribosomal protein S3Ae</fullName>
    </alternativeName>
    <alternativeName>
        <fullName evidence="1">Ribosomal protein S1e</fullName>
    </alternativeName>
</protein>
<evidence type="ECO:0000255" key="1">
    <source>
        <dbReference type="HAMAP-Rule" id="MF_00359"/>
    </source>
</evidence>
<evidence type="ECO:0000305" key="2"/>
<proteinExistence type="inferred from homology"/>
<feature type="chain" id="PRO_1000120685" description="Small ribosomal subunit protein eS1">
    <location>
        <begin position="1"/>
        <end position="206"/>
    </location>
</feature>
<dbReference type="EMBL" id="AM774415">
    <property type="protein sequence ID" value="CAP13522.1"/>
    <property type="molecule type" value="Genomic_DNA"/>
</dbReference>
<dbReference type="RefSeq" id="WP_010902549.1">
    <property type="nucleotide sequence ID" value="NC_010364.1"/>
</dbReference>
<dbReference type="SMR" id="B0R457"/>
<dbReference type="EnsemblBacteria" id="CAP13522">
    <property type="protein sequence ID" value="CAP13522"/>
    <property type="gene ID" value="OE_2159R"/>
</dbReference>
<dbReference type="KEGG" id="hsl:OE_2159R"/>
<dbReference type="HOGENOM" id="CLU_062507_1_0_2"/>
<dbReference type="PhylomeDB" id="B0R457"/>
<dbReference type="Proteomes" id="UP000001321">
    <property type="component" value="Chromosome"/>
</dbReference>
<dbReference type="GO" id="GO:1990904">
    <property type="term" value="C:ribonucleoprotein complex"/>
    <property type="evidence" value="ECO:0007669"/>
    <property type="project" value="UniProtKB-KW"/>
</dbReference>
<dbReference type="GO" id="GO:0005840">
    <property type="term" value="C:ribosome"/>
    <property type="evidence" value="ECO:0007669"/>
    <property type="project" value="UniProtKB-KW"/>
</dbReference>
<dbReference type="GO" id="GO:0003735">
    <property type="term" value="F:structural constituent of ribosome"/>
    <property type="evidence" value="ECO:0007669"/>
    <property type="project" value="InterPro"/>
</dbReference>
<dbReference type="GO" id="GO:0006412">
    <property type="term" value="P:translation"/>
    <property type="evidence" value="ECO:0007669"/>
    <property type="project" value="UniProtKB-UniRule"/>
</dbReference>
<dbReference type="HAMAP" id="MF_00359">
    <property type="entry name" value="Ribosomal_eS1"/>
    <property type="match status" value="1"/>
</dbReference>
<dbReference type="InterPro" id="IPR001593">
    <property type="entry name" value="Ribosomal_eS1"/>
</dbReference>
<dbReference type="InterPro" id="IPR030838">
    <property type="entry name" value="Ribosomal_eS1_arc"/>
</dbReference>
<dbReference type="NCBIfam" id="NF003142">
    <property type="entry name" value="PRK04057.1"/>
    <property type="match status" value="1"/>
</dbReference>
<dbReference type="PANTHER" id="PTHR11830">
    <property type="entry name" value="40S RIBOSOMAL PROTEIN S3A"/>
    <property type="match status" value="1"/>
</dbReference>
<dbReference type="Pfam" id="PF01015">
    <property type="entry name" value="Ribosomal_S3Ae"/>
    <property type="match status" value="1"/>
</dbReference>
<dbReference type="SMART" id="SM01397">
    <property type="entry name" value="Ribosomal_S3Ae"/>
    <property type="match status" value="1"/>
</dbReference>
<accession>B0R457</accession>
<comment type="similarity">
    <text evidence="1">Belongs to the eukaryotic ribosomal protein eS1 family.</text>
</comment>
<name>RS3A_HALS3</name>
<organism>
    <name type="scientific">Halobacterium salinarum (strain ATCC 29341 / DSM 671 / R1)</name>
    <dbReference type="NCBI Taxonomy" id="478009"/>
    <lineage>
        <taxon>Archaea</taxon>
        <taxon>Methanobacteriati</taxon>
        <taxon>Methanobacteriota</taxon>
        <taxon>Stenosarchaea group</taxon>
        <taxon>Halobacteria</taxon>
        <taxon>Halobacteriales</taxon>
        <taxon>Halobacteriaceae</taxon>
        <taxon>Halobacterium</taxon>
        <taxon>Halobacterium salinarum NRC-34001</taxon>
    </lineage>
</organism>
<reference key="1">
    <citation type="journal article" date="2008" name="Genomics">
        <title>Evolution in the laboratory: the genome of Halobacterium salinarum strain R1 compared to that of strain NRC-1.</title>
        <authorList>
            <person name="Pfeiffer F."/>
            <person name="Schuster S.C."/>
            <person name="Broicher A."/>
            <person name="Falb M."/>
            <person name="Palm P."/>
            <person name="Rodewald K."/>
            <person name="Ruepp A."/>
            <person name="Soppa J."/>
            <person name="Tittor J."/>
            <person name="Oesterhelt D."/>
        </authorList>
    </citation>
    <scope>NUCLEOTIDE SEQUENCE [LARGE SCALE GENOMIC DNA]</scope>
    <source>
        <strain>ATCC 29341 / DSM 671 / R1</strain>
    </source>
</reference>
<sequence>MSERSVSKQDQEKRWYTVLAPEEFDRAELGETLAEEPDQVYDRTIQAALSDVRDGGDNNIKLTFQIDDVGSDSASTQFVQAELTRDYQRSLVRRGSSKVAVTVTVLTTDDYRVRIQPVAYTTKQADQSQQHAIRRTMIDLVEEAGEERTFEALLNSIIEGRLSSAIYDEANTIYPLRRVEVEKATLEAHPEEVHEEEETAVDFSGE</sequence>